<reference key="1">
    <citation type="journal article" date="2004" name="Nature">
        <title>Genome evolution in yeasts.</title>
        <authorList>
            <person name="Dujon B."/>
            <person name="Sherman D."/>
            <person name="Fischer G."/>
            <person name="Durrens P."/>
            <person name="Casaregola S."/>
            <person name="Lafontaine I."/>
            <person name="de Montigny J."/>
            <person name="Marck C."/>
            <person name="Neuveglise C."/>
            <person name="Talla E."/>
            <person name="Goffard N."/>
            <person name="Frangeul L."/>
            <person name="Aigle M."/>
            <person name="Anthouard V."/>
            <person name="Babour A."/>
            <person name="Barbe V."/>
            <person name="Barnay S."/>
            <person name="Blanchin S."/>
            <person name="Beckerich J.-M."/>
            <person name="Beyne E."/>
            <person name="Bleykasten C."/>
            <person name="Boisrame A."/>
            <person name="Boyer J."/>
            <person name="Cattolico L."/>
            <person name="Confanioleri F."/>
            <person name="de Daruvar A."/>
            <person name="Despons L."/>
            <person name="Fabre E."/>
            <person name="Fairhead C."/>
            <person name="Ferry-Dumazet H."/>
            <person name="Groppi A."/>
            <person name="Hantraye F."/>
            <person name="Hennequin C."/>
            <person name="Jauniaux N."/>
            <person name="Joyet P."/>
            <person name="Kachouri R."/>
            <person name="Kerrest A."/>
            <person name="Koszul R."/>
            <person name="Lemaire M."/>
            <person name="Lesur I."/>
            <person name="Ma L."/>
            <person name="Muller H."/>
            <person name="Nicaud J.-M."/>
            <person name="Nikolski M."/>
            <person name="Oztas S."/>
            <person name="Ozier-Kalogeropoulos O."/>
            <person name="Pellenz S."/>
            <person name="Potier S."/>
            <person name="Richard G.-F."/>
            <person name="Straub M.-L."/>
            <person name="Suleau A."/>
            <person name="Swennen D."/>
            <person name="Tekaia F."/>
            <person name="Wesolowski-Louvel M."/>
            <person name="Westhof E."/>
            <person name="Wirth B."/>
            <person name="Zeniou-Meyer M."/>
            <person name="Zivanovic Y."/>
            <person name="Bolotin-Fukuhara M."/>
            <person name="Thierry A."/>
            <person name="Bouchier C."/>
            <person name="Caudron B."/>
            <person name="Scarpelli C."/>
            <person name="Gaillardin C."/>
            <person name="Weissenbach J."/>
            <person name="Wincker P."/>
            <person name="Souciet J.-L."/>
        </authorList>
    </citation>
    <scope>NUCLEOTIDE SEQUENCE [LARGE SCALE GENOMIC DNA]</scope>
    <source>
        <strain>ATCC 8585 / CBS 2359 / DSM 70799 / NBRC 1267 / NRRL Y-1140 / WM37</strain>
    </source>
</reference>
<proteinExistence type="inferred from homology"/>
<organism>
    <name type="scientific">Kluyveromyces lactis (strain ATCC 8585 / CBS 2359 / DSM 70799 / NBRC 1267 / NRRL Y-1140 / WM37)</name>
    <name type="common">Yeast</name>
    <name type="synonym">Candida sphaerica</name>
    <dbReference type="NCBI Taxonomy" id="284590"/>
    <lineage>
        <taxon>Eukaryota</taxon>
        <taxon>Fungi</taxon>
        <taxon>Dikarya</taxon>
        <taxon>Ascomycota</taxon>
        <taxon>Saccharomycotina</taxon>
        <taxon>Saccharomycetes</taxon>
        <taxon>Saccharomycetales</taxon>
        <taxon>Saccharomycetaceae</taxon>
        <taxon>Kluyveromyces</taxon>
    </lineage>
</organism>
<sequence length="487" mass="54240">MAKIEKKQAVKNNQVLSLAEKIKRKALEKQQQAHANEPSPSDEDSAQSNSKDSNSNEQPEESEEIFESFTELDLVPELIEACKNLNYNKPTPIQSKAIPPALKGSDIIGLAQTGSGKTAAFAIPILNQLWHDQQPYYACILAPTRELAQQIKETFDSLGSLMGVRSTCIVGGMSMMDQARDLMRKPHIIIATPGRLMDHLENTKGFNLRKLKYLVMDEADRLLDMEFGPVLDRILNIIPTQGRTTYLFSATMTSKIDKLQRASLTNPVKCAVSNKYQTVDTLVQTLMVVPGGLKNTFLIYLLNEFIGKSTIVFTRTKANAERISNLCNLLEFSATALHGDLNQNQRTGALDLFKAGKRSILVATDVAARGLDIPSVDIVINYDIPVDSKSYIHRVGRTARAGRSGKSISLVSQYDLELILRIEDVLGKKLPKENVDKDAILALRDSVDKANGEVVMELNRRNKEKQARGKGRRGRMATRDNMDREER</sequence>
<keyword id="KW-0067">ATP-binding</keyword>
<keyword id="KW-0347">Helicase</keyword>
<keyword id="KW-0378">Hydrolase</keyword>
<keyword id="KW-0547">Nucleotide-binding</keyword>
<keyword id="KW-0539">Nucleus</keyword>
<keyword id="KW-1185">Reference proteome</keyword>
<keyword id="KW-0690">Ribosome biogenesis</keyword>
<keyword id="KW-0694">RNA-binding</keyword>
<keyword id="KW-0698">rRNA processing</keyword>
<feature type="chain" id="PRO_0000232276" description="ATP-dependent rRNA helicase RRP3">
    <location>
        <begin position="1"/>
        <end position="487"/>
    </location>
</feature>
<feature type="domain" description="Helicase ATP-binding" evidence="2">
    <location>
        <begin position="98"/>
        <end position="270"/>
    </location>
</feature>
<feature type="domain" description="Helicase C-terminal" evidence="3">
    <location>
        <begin position="298"/>
        <end position="442"/>
    </location>
</feature>
<feature type="region of interest" description="Disordered" evidence="4">
    <location>
        <begin position="22"/>
        <end position="67"/>
    </location>
</feature>
<feature type="region of interest" description="Disordered" evidence="4">
    <location>
        <begin position="459"/>
        <end position="487"/>
    </location>
</feature>
<feature type="short sequence motif" description="Q motif" evidence="5">
    <location>
        <begin position="67"/>
        <end position="95"/>
    </location>
</feature>
<feature type="short sequence motif" description="DEAD box" evidence="5">
    <location>
        <begin position="217"/>
        <end position="220"/>
    </location>
</feature>
<feature type="compositionally biased region" description="Basic and acidic residues" evidence="4">
    <location>
        <begin position="477"/>
        <end position="487"/>
    </location>
</feature>
<feature type="binding site" evidence="2">
    <location>
        <begin position="111"/>
        <end position="118"/>
    </location>
    <ligand>
        <name>ATP</name>
        <dbReference type="ChEBI" id="CHEBI:30616"/>
    </ligand>
</feature>
<name>RRP3_KLULA</name>
<gene>
    <name evidence="1" type="primary">RRP3</name>
    <name type="ordered locus">KLLA0C14608g</name>
</gene>
<evidence type="ECO:0000250" key="1">
    <source>
        <dbReference type="UniProtKB" id="P38712"/>
    </source>
</evidence>
<evidence type="ECO:0000255" key="2">
    <source>
        <dbReference type="PROSITE-ProRule" id="PRU00541"/>
    </source>
</evidence>
<evidence type="ECO:0000255" key="3">
    <source>
        <dbReference type="PROSITE-ProRule" id="PRU00542"/>
    </source>
</evidence>
<evidence type="ECO:0000256" key="4">
    <source>
        <dbReference type="SAM" id="MobiDB-lite"/>
    </source>
</evidence>
<evidence type="ECO:0000305" key="5"/>
<dbReference type="EC" id="3.6.4.13" evidence="1"/>
<dbReference type="EMBL" id="CR382123">
    <property type="protein sequence ID" value="CAH01705.1"/>
    <property type="molecule type" value="Genomic_DNA"/>
</dbReference>
<dbReference type="RefSeq" id="XP_452854.1">
    <property type="nucleotide sequence ID" value="XM_452854.1"/>
</dbReference>
<dbReference type="SMR" id="Q6CT85"/>
<dbReference type="FunCoup" id="Q6CT85">
    <property type="interactions" value="1213"/>
</dbReference>
<dbReference type="STRING" id="284590.Q6CT85"/>
<dbReference type="PaxDb" id="284590-Q6CT85"/>
<dbReference type="KEGG" id="kla:KLLA0_C14608g"/>
<dbReference type="eggNOG" id="KOG0330">
    <property type="taxonomic scope" value="Eukaryota"/>
</dbReference>
<dbReference type="HOGENOM" id="CLU_003041_1_1_1"/>
<dbReference type="InParanoid" id="Q6CT85"/>
<dbReference type="OMA" id="GIGIKCC"/>
<dbReference type="Proteomes" id="UP000000598">
    <property type="component" value="Chromosome C"/>
</dbReference>
<dbReference type="GO" id="GO:0005829">
    <property type="term" value="C:cytosol"/>
    <property type="evidence" value="ECO:0007669"/>
    <property type="project" value="TreeGrafter"/>
</dbReference>
<dbReference type="GO" id="GO:0005634">
    <property type="term" value="C:nucleus"/>
    <property type="evidence" value="ECO:0007669"/>
    <property type="project" value="UniProtKB-SubCell"/>
</dbReference>
<dbReference type="GO" id="GO:0005524">
    <property type="term" value="F:ATP binding"/>
    <property type="evidence" value="ECO:0007669"/>
    <property type="project" value="UniProtKB-KW"/>
</dbReference>
<dbReference type="GO" id="GO:0016887">
    <property type="term" value="F:ATP hydrolysis activity"/>
    <property type="evidence" value="ECO:0007669"/>
    <property type="project" value="RHEA"/>
</dbReference>
<dbReference type="GO" id="GO:0003723">
    <property type="term" value="F:RNA binding"/>
    <property type="evidence" value="ECO:0007669"/>
    <property type="project" value="UniProtKB-KW"/>
</dbReference>
<dbReference type="GO" id="GO:0003724">
    <property type="term" value="F:RNA helicase activity"/>
    <property type="evidence" value="ECO:0007669"/>
    <property type="project" value="UniProtKB-EC"/>
</dbReference>
<dbReference type="GO" id="GO:0006364">
    <property type="term" value="P:rRNA processing"/>
    <property type="evidence" value="ECO:0007669"/>
    <property type="project" value="UniProtKB-KW"/>
</dbReference>
<dbReference type="CDD" id="cd17954">
    <property type="entry name" value="DEADc_DDX47"/>
    <property type="match status" value="1"/>
</dbReference>
<dbReference type="CDD" id="cd18787">
    <property type="entry name" value="SF2_C_DEAD"/>
    <property type="match status" value="1"/>
</dbReference>
<dbReference type="FunFam" id="3.40.50.300:FF:000626">
    <property type="entry name" value="probable ATP-dependent RNA helicase DDX47"/>
    <property type="match status" value="1"/>
</dbReference>
<dbReference type="FunFam" id="3.40.50.300:FF:000681">
    <property type="entry name" value="probable ATP-dependent RNA helicase DDX47"/>
    <property type="match status" value="1"/>
</dbReference>
<dbReference type="Gene3D" id="3.40.50.300">
    <property type="entry name" value="P-loop containing nucleotide triphosphate hydrolases"/>
    <property type="match status" value="2"/>
</dbReference>
<dbReference type="InterPro" id="IPR044765">
    <property type="entry name" value="DDX47/Rrp3_DEADc"/>
</dbReference>
<dbReference type="InterPro" id="IPR011545">
    <property type="entry name" value="DEAD/DEAH_box_helicase_dom"/>
</dbReference>
<dbReference type="InterPro" id="IPR050079">
    <property type="entry name" value="DEAD_box_RNA_helicase"/>
</dbReference>
<dbReference type="InterPro" id="IPR014001">
    <property type="entry name" value="Helicase_ATP-bd"/>
</dbReference>
<dbReference type="InterPro" id="IPR001650">
    <property type="entry name" value="Helicase_C-like"/>
</dbReference>
<dbReference type="InterPro" id="IPR027417">
    <property type="entry name" value="P-loop_NTPase"/>
</dbReference>
<dbReference type="InterPro" id="IPR000629">
    <property type="entry name" value="RNA-helicase_DEAD-box_CS"/>
</dbReference>
<dbReference type="InterPro" id="IPR014014">
    <property type="entry name" value="RNA_helicase_DEAD_Q_motif"/>
</dbReference>
<dbReference type="PANTHER" id="PTHR47959:SF24">
    <property type="entry name" value="ATP-DEPENDENT RNA HELICASE"/>
    <property type="match status" value="1"/>
</dbReference>
<dbReference type="PANTHER" id="PTHR47959">
    <property type="entry name" value="ATP-DEPENDENT RNA HELICASE RHLE-RELATED"/>
    <property type="match status" value="1"/>
</dbReference>
<dbReference type="Pfam" id="PF00270">
    <property type="entry name" value="DEAD"/>
    <property type="match status" value="1"/>
</dbReference>
<dbReference type="Pfam" id="PF00271">
    <property type="entry name" value="Helicase_C"/>
    <property type="match status" value="1"/>
</dbReference>
<dbReference type="SMART" id="SM00487">
    <property type="entry name" value="DEXDc"/>
    <property type="match status" value="1"/>
</dbReference>
<dbReference type="SMART" id="SM00490">
    <property type="entry name" value="HELICc"/>
    <property type="match status" value="1"/>
</dbReference>
<dbReference type="SUPFAM" id="SSF52540">
    <property type="entry name" value="P-loop containing nucleoside triphosphate hydrolases"/>
    <property type="match status" value="1"/>
</dbReference>
<dbReference type="PROSITE" id="PS00039">
    <property type="entry name" value="DEAD_ATP_HELICASE"/>
    <property type="match status" value="1"/>
</dbReference>
<dbReference type="PROSITE" id="PS51192">
    <property type="entry name" value="HELICASE_ATP_BIND_1"/>
    <property type="match status" value="1"/>
</dbReference>
<dbReference type="PROSITE" id="PS51194">
    <property type="entry name" value="HELICASE_CTER"/>
    <property type="match status" value="1"/>
</dbReference>
<dbReference type="PROSITE" id="PS51195">
    <property type="entry name" value="Q_MOTIF"/>
    <property type="match status" value="1"/>
</dbReference>
<comment type="function">
    <text evidence="1">ATP-dependent rRNA helicase required for pre-ribosomal RNA processing. Involved in the maturation of the 35S-pre-rRNA and to its cleavage to mature 18S rRNA.</text>
</comment>
<comment type="catalytic activity">
    <reaction evidence="1">
        <text>ATP + H2O = ADP + phosphate + H(+)</text>
        <dbReference type="Rhea" id="RHEA:13065"/>
        <dbReference type="ChEBI" id="CHEBI:15377"/>
        <dbReference type="ChEBI" id="CHEBI:15378"/>
        <dbReference type="ChEBI" id="CHEBI:30616"/>
        <dbReference type="ChEBI" id="CHEBI:43474"/>
        <dbReference type="ChEBI" id="CHEBI:456216"/>
        <dbReference type="EC" id="3.6.4.13"/>
    </reaction>
</comment>
<comment type="subunit">
    <text evidence="1">Interacts with the SSU processome.</text>
</comment>
<comment type="subcellular location">
    <subcellularLocation>
        <location evidence="5">Nucleus</location>
    </subcellularLocation>
</comment>
<comment type="domain">
    <text evidence="5">The Q motif is unique to and characteristic of the DEAD box family of RNA helicases and controls ATP binding and hydrolysis.</text>
</comment>
<comment type="similarity">
    <text evidence="5">Belongs to the DEAD box helicase family. DDX47/RRP3 subfamily.</text>
</comment>
<protein>
    <recommendedName>
        <fullName evidence="5">ATP-dependent rRNA helicase RRP3</fullName>
        <ecNumber evidence="1">3.6.4.13</ecNumber>
    </recommendedName>
</protein>
<accession>Q6CT85</accession>